<dbReference type="EMBL" id="CP001089">
    <property type="protein sequence ID" value="ACD95082.1"/>
    <property type="molecule type" value="Genomic_DNA"/>
</dbReference>
<dbReference type="RefSeq" id="WP_012469427.1">
    <property type="nucleotide sequence ID" value="NC_010814.1"/>
</dbReference>
<dbReference type="SMR" id="B3E845"/>
<dbReference type="STRING" id="398767.Glov_1361"/>
<dbReference type="KEGG" id="glo:Glov_1361"/>
<dbReference type="eggNOG" id="COG0097">
    <property type="taxonomic scope" value="Bacteria"/>
</dbReference>
<dbReference type="HOGENOM" id="CLU_065464_1_2_7"/>
<dbReference type="OrthoDB" id="9805007at2"/>
<dbReference type="Proteomes" id="UP000002420">
    <property type="component" value="Chromosome"/>
</dbReference>
<dbReference type="GO" id="GO:0022625">
    <property type="term" value="C:cytosolic large ribosomal subunit"/>
    <property type="evidence" value="ECO:0007669"/>
    <property type="project" value="TreeGrafter"/>
</dbReference>
<dbReference type="GO" id="GO:0019843">
    <property type="term" value="F:rRNA binding"/>
    <property type="evidence" value="ECO:0007669"/>
    <property type="project" value="UniProtKB-UniRule"/>
</dbReference>
<dbReference type="GO" id="GO:0003735">
    <property type="term" value="F:structural constituent of ribosome"/>
    <property type="evidence" value="ECO:0007669"/>
    <property type="project" value="InterPro"/>
</dbReference>
<dbReference type="GO" id="GO:0002181">
    <property type="term" value="P:cytoplasmic translation"/>
    <property type="evidence" value="ECO:0007669"/>
    <property type="project" value="TreeGrafter"/>
</dbReference>
<dbReference type="FunFam" id="3.90.930.12:FF:000001">
    <property type="entry name" value="50S ribosomal protein L6"/>
    <property type="match status" value="1"/>
</dbReference>
<dbReference type="FunFam" id="3.90.930.12:FF:000002">
    <property type="entry name" value="50S ribosomal protein L6"/>
    <property type="match status" value="1"/>
</dbReference>
<dbReference type="Gene3D" id="3.90.930.12">
    <property type="entry name" value="Ribosomal protein L6, alpha-beta domain"/>
    <property type="match status" value="2"/>
</dbReference>
<dbReference type="HAMAP" id="MF_01365_B">
    <property type="entry name" value="Ribosomal_uL6_B"/>
    <property type="match status" value="1"/>
</dbReference>
<dbReference type="InterPro" id="IPR000702">
    <property type="entry name" value="Ribosomal_uL6-like"/>
</dbReference>
<dbReference type="InterPro" id="IPR036789">
    <property type="entry name" value="Ribosomal_uL6-like_a/b-dom_sf"/>
</dbReference>
<dbReference type="InterPro" id="IPR020040">
    <property type="entry name" value="Ribosomal_uL6_a/b-dom"/>
</dbReference>
<dbReference type="InterPro" id="IPR019906">
    <property type="entry name" value="Ribosomal_uL6_bac-type"/>
</dbReference>
<dbReference type="InterPro" id="IPR002358">
    <property type="entry name" value="Ribosomal_uL6_CS"/>
</dbReference>
<dbReference type="NCBIfam" id="TIGR03654">
    <property type="entry name" value="L6_bact"/>
    <property type="match status" value="1"/>
</dbReference>
<dbReference type="PANTHER" id="PTHR11655">
    <property type="entry name" value="60S/50S RIBOSOMAL PROTEIN L6/L9"/>
    <property type="match status" value="1"/>
</dbReference>
<dbReference type="PANTHER" id="PTHR11655:SF14">
    <property type="entry name" value="LARGE RIBOSOMAL SUBUNIT PROTEIN UL6M"/>
    <property type="match status" value="1"/>
</dbReference>
<dbReference type="Pfam" id="PF00347">
    <property type="entry name" value="Ribosomal_L6"/>
    <property type="match status" value="2"/>
</dbReference>
<dbReference type="PIRSF" id="PIRSF002162">
    <property type="entry name" value="Ribosomal_L6"/>
    <property type="match status" value="1"/>
</dbReference>
<dbReference type="PRINTS" id="PR00059">
    <property type="entry name" value="RIBOSOMALL6"/>
</dbReference>
<dbReference type="SUPFAM" id="SSF56053">
    <property type="entry name" value="Ribosomal protein L6"/>
    <property type="match status" value="2"/>
</dbReference>
<dbReference type="PROSITE" id="PS00525">
    <property type="entry name" value="RIBOSOMAL_L6_1"/>
    <property type="match status" value="1"/>
</dbReference>
<accession>B3E845</accession>
<keyword id="KW-1185">Reference proteome</keyword>
<keyword id="KW-0687">Ribonucleoprotein</keyword>
<keyword id="KW-0689">Ribosomal protein</keyword>
<keyword id="KW-0694">RNA-binding</keyword>
<keyword id="KW-0699">rRNA-binding</keyword>
<evidence type="ECO:0000255" key="1">
    <source>
        <dbReference type="HAMAP-Rule" id="MF_01365"/>
    </source>
</evidence>
<evidence type="ECO:0000305" key="2"/>
<name>RL6_TRIL1</name>
<sequence>MSRIGKLPIEVPKGVTVTFVDSVLTVKGPKGELCRTIMPEVSVAVEDGKISVTRPDDAIKSRSAHGLTRTLVNNMVVGVTAGYQTDLEINGVGYRAEVKGAELVLSLGYSHPVVFPLPSGITVEVDKMTKLAVKGIDKELVGQTAAKIRSFRGPEPYKGKGIKYATETILRKAGKTGKK</sequence>
<protein>
    <recommendedName>
        <fullName evidence="1">Large ribosomal subunit protein uL6</fullName>
    </recommendedName>
    <alternativeName>
        <fullName evidence="2">50S ribosomal protein L6</fullName>
    </alternativeName>
</protein>
<feature type="chain" id="PRO_1000143996" description="Large ribosomal subunit protein uL6">
    <location>
        <begin position="1"/>
        <end position="179"/>
    </location>
</feature>
<reference key="1">
    <citation type="submission" date="2008-05" db="EMBL/GenBank/DDBJ databases">
        <title>Complete sequence of chromosome of Geobacter lovleyi SZ.</title>
        <authorList>
            <consortium name="US DOE Joint Genome Institute"/>
            <person name="Lucas S."/>
            <person name="Copeland A."/>
            <person name="Lapidus A."/>
            <person name="Glavina del Rio T."/>
            <person name="Dalin E."/>
            <person name="Tice H."/>
            <person name="Bruce D."/>
            <person name="Goodwin L."/>
            <person name="Pitluck S."/>
            <person name="Chertkov O."/>
            <person name="Meincke L."/>
            <person name="Brettin T."/>
            <person name="Detter J.C."/>
            <person name="Han C."/>
            <person name="Tapia R."/>
            <person name="Kuske C.R."/>
            <person name="Schmutz J."/>
            <person name="Larimer F."/>
            <person name="Land M."/>
            <person name="Hauser L."/>
            <person name="Kyrpides N."/>
            <person name="Mikhailova N."/>
            <person name="Sung Y."/>
            <person name="Fletcher K.E."/>
            <person name="Ritalahti K.M."/>
            <person name="Loeffler F.E."/>
            <person name="Richardson P."/>
        </authorList>
    </citation>
    <scope>NUCLEOTIDE SEQUENCE [LARGE SCALE GENOMIC DNA]</scope>
    <source>
        <strain>ATCC BAA-1151 / DSM 17278 / SZ</strain>
    </source>
</reference>
<comment type="function">
    <text evidence="1">This protein binds to the 23S rRNA, and is important in its secondary structure. It is located near the subunit interface in the base of the L7/L12 stalk, and near the tRNA binding site of the peptidyltransferase center.</text>
</comment>
<comment type="subunit">
    <text evidence="1">Part of the 50S ribosomal subunit.</text>
</comment>
<comment type="similarity">
    <text evidence="1">Belongs to the universal ribosomal protein uL6 family.</text>
</comment>
<proteinExistence type="inferred from homology"/>
<gene>
    <name evidence="1" type="primary">rplF</name>
    <name type="ordered locus">Glov_1361</name>
</gene>
<organism>
    <name type="scientific">Trichlorobacter lovleyi (strain ATCC BAA-1151 / DSM 17278 / SZ)</name>
    <name type="common">Geobacter lovleyi</name>
    <dbReference type="NCBI Taxonomy" id="398767"/>
    <lineage>
        <taxon>Bacteria</taxon>
        <taxon>Pseudomonadati</taxon>
        <taxon>Thermodesulfobacteriota</taxon>
        <taxon>Desulfuromonadia</taxon>
        <taxon>Geobacterales</taxon>
        <taxon>Geobacteraceae</taxon>
        <taxon>Trichlorobacter</taxon>
    </lineage>
</organism>